<organism>
    <name type="scientific">Paramagnetospirillum magneticum (strain ATCC 700264 / AMB-1)</name>
    <name type="common">Magnetospirillum magneticum</name>
    <dbReference type="NCBI Taxonomy" id="342108"/>
    <lineage>
        <taxon>Bacteria</taxon>
        <taxon>Pseudomonadati</taxon>
        <taxon>Pseudomonadota</taxon>
        <taxon>Alphaproteobacteria</taxon>
        <taxon>Rhodospirillales</taxon>
        <taxon>Magnetospirillaceae</taxon>
        <taxon>Paramagnetospirillum</taxon>
    </lineage>
</organism>
<comment type="function">
    <text evidence="1">Displays ATPase and GTPase activities.</text>
</comment>
<comment type="similarity">
    <text evidence="1">Belongs to the RapZ-like family.</text>
</comment>
<reference key="1">
    <citation type="journal article" date="2005" name="DNA Res.">
        <title>Complete genome sequence of the facultative anaerobic magnetotactic bacterium Magnetospirillum sp. strain AMB-1.</title>
        <authorList>
            <person name="Matsunaga T."/>
            <person name="Okamura Y."/>
            <person name="Fukuda Y."/>
            <person name="Wahyudi A.T."/>
            <person name="Murase Y."/>
            <person name="Takeyama H."/>
        </authorList>
    </citation>
    <scope>NUCLEOTIDE SEQUENCE [LARGE SCALE GENOMIC DNA]</scope>
    <source>
        <strain>ATCC 700264 / AMB-1</strain>
    </source>
</reference>
<evidence type="ECO:0000255" key="1">
    <source>
        <dbReference type="HAMAP-Rule" id="MF_00636"/>
    </source>
</evidence>
<evidence type="ECO:0000256" key="2">
    <source>
        <dbReference type="SAM" id="MobiDB-lite"/>
    </source>
</evidence>
<protein>
    <recommendedName>
        <fullName evidence="1">Nucleotide-binding protein amb4396</fullName>
    </recommendedName>
</protein>
<dbReference type="EMBL" id="AP007255">
    <property type="protein sequence ID" value="BAE53200.1"/>
    <property type="molecule type" value="Genomic_DNA"/>
</dbReference>
<dbReference type="RefSeq" id="WP_011386741.1">
    <property type="nucleotide sequence ID" value="NC_007626.1"/>
</dbReference>
<dbReference type="SMR" id="Q2VYX5"/>
<dbReference type="STRING" id="342108.amb4396"/>
<dbReference type="KEGG" id="mag:amb4396"/>
<dbReference type="HOGENOM" id="CLU_059558_0_0_5"/>
<dbReference type="OrthoDB" id="9784461at2"/>
<dbReference type="Proteomes" id="UP000007058">
    <property type="component" value="Chromosome"/>
</dbReference>
<dbReference type="GO" id="GO:0005524">
    <property type="term" value="F:ATP binding"/>
    <property type="evidence" value="ECO:0007669"/>
    <property type="project" value="UniProtKB-UniRule"/>
</dbReference>
<dbReference type="GO" id="GO:0005525">
    <property type="term" value="F:GTP binding"/>
    <property type="evidence" value="ECO:0007669"/>
    <property type="project" value="UniProtKB-UniRule"/>
</dbReference>
<dbReference type="HAMAP" id="MF_00636">
    <property type="entry name" value="RapZ_like"/>
    <property type="match status" value="1"/>
</dbReference>
<dbReference type="InterPro" id="IPR027417">
    <property type="entry name" value="P-loop_NTPase"/>
</dbReference>
<dbReference type="InterPro" id="IPR005337">
    <property type="entry name" value="RapZ-like"/>
</dbReference>
<dbReference type="InterPro" id="IPR053930">
    <property type="entry name" value="RapZ-like_N"/>
</dbReference>
<dbReference type="InterPro" id="IPR053931">
    <property type="entry name" value="RapZ_C"/>
</dbReference>
<dbReference type="NCBIfam" id="NF003828">
    <property type="entry name" value="PRK05416.1"/>
    <property type="match status" value="1"/>
</dbReference>
<dbReference type="PANTHER" id="PTHR30448">
    <property type="entry name" value="RNASE ADAPTER PROTEIN RAPZ"/>
    <property type="match status" value="1"/>
</dbReference>
<dbReference type="PANTHER" id="PTHR30448:SF0">
    <property type="entry name" value="RNASE ADAPTER PROTEIN RAPZ"/>
    <property type="match status" value="1"/>
</dbReference>
<dbReference type="Pfam" id="PF22740">
    <property type="entry name" value="PapZ_C"/>
    <property type="match status" value="1"/>
</dbReference>
<dbReference type="Pfam" id="PF03668">
    <property type="entry name" value="RapZ-like_N"/>
    <property type="match status" value="1"/>
</dbReference>
<dbReference type="PIRSF" id="PIRSF005052">
    <property type="entry name" value="P-loopkin"/>
    <property type="match status" value="1"/>
</dbReference>
<dbReference type="SUPFAM" id="SSF52540">
    <property type="entry name" value="P-loop containing nucleoside triphosphate hydrolases"/>
    <property type="match status" value="1"/>
</dbReference>
<proteinExistence type="inferred from homology"/>
<accession>Q2VYX5</accession>
<name>Y4396_PARM1</name>
<feature type="chain" id="PRO_0000258971" description="Nucleotide-binding protein amb4396">
    <location>
        <begin position="1"/>
        <end position="306"/>
    </location>
</feature>
<feature type="region of interest" description="Disordered" evidence="2">
    <location>
        <begin position="1"/>
        <end position="20"/>
    </location>
</feature>
<feature type="compositionally biased region" description="Polar residues" evidence="2">
    <location>
        <begin position="1"/>
        <end position="14"/>
    </location>
</feature>
<feature type="binding site" evidence="1">
    <location>
        <begin position="29"/>
        <end position="36"/>
    </location>
    <ligand>
        <name>ATP</name>
        <dbReference type="ChEBI" id="CHEBI:30616"/>
    </ligand>
</feature>
<feature type="binding site" evidence="1">
    <location>
        <begin position="77"/>
        <end position="80"/>
    </location>
    <ligand>
        <name>GTP</name>
        <dbReference type="ChEBI" id="CHEBI:37565"/>
    </ligand>
</feature>
<gene>
    <name type="ordered locus">amb4396</name>
</gene>
<sequence length="306" mass="33272">MSDLHSSPTDQTSAPAHAGGGNRVVIVTGMSGAGKTMALKALEDMGWEAVDNLPLALAASLVRSGGGMARPLALGVDIRTRDFGVEPVLAALDHLMGESGLDVRLLFLDCEDDVLCRRFTETRRRHPMAVDRPLLDGIRHERALVSPLKRRADVMIDTTNQPPGEFKRLLAGHFGLESNGGLGVFVTSFAYRNGLPREADLVFDARFLANPHYVPELKPLTGRDPAVAQYVAADPAFGPFIESLTRLLEPLLPRFAAEGKSYLTIAVGCTGGRHRSVAIAEHLAQWMQRRGGKVELRHRELDERGS</sequence>
<keyword id="KW-0067">ATP-binding</keyword>
<keyword id="KW-0342">GTP-binding</keyword>
<keyword id="KW-0547">Nucleotide-binding</keyword>